<protein>
    <recommendedName>
        <fullName evidence="1">Chaperone SurA</fullName>
    </recommendedName>
    <alternativeName>
        <fullName evidence="1">Peptidyl-prolyl cis-trans isomerase SurA</fullName>
        <shortName evidence="1">PPIase SurA</shortName>
        <ecNumber evidence="1">5.2.1.8</ecNumber>
    </alternativeName>
    <alternativeName>
        <fullName evidence="1">Rotamase SurA</fullName>
    </alternativeName>
</protein>
<reference key="1">
    <citation type="journal article" date="2004" name="Proc. Natl. Acad. Sci. U.S.A.">
        <title>Insights into the evolution of Yersinia pestis through whole-genome comparison with Yersinia pseudotuberculosis.</title>
        <authorList>
            <person name="Chain P.S.G."/>
            <person name="Carniel E."/>
            <person name="Larimer F.W."/>
            <person name="Lamerdin J."/>
            <person name="Stoutland P.O."/>
            <person name="Regala W.M."/>
            <person name="Georgescu A.M."/>
            <person name="Vergez L.M."/>
            <person name="Land M.L."/>
            <person name="Motin V.L."/>
            <person name="Brubaker R.R."/>
            <person name="Fowler J."/>
            <person name="Hinnebusch J."/>
            <person name="Marceau M."/>
            <person name="Medigue C."/>
            <person name="Simonet M."/>
            <person name="Chenal-Francisque V."/>
            <person name="Souza B."/>
            <person name="Dacheux D."/>
            <person name="Elliott J.M."/>
            <person name="Derbise A."/>
            <person name="Hauser L.J."/>
            <person name="Garcia E."/>
        </authorList>
    </citation>
    <scope>NUCLEOTIDE SEQUENCE [LARGE SCALE GENOMIC DNA]</scope>
    <source>
        <strain>IP32953</strain>
    </source>
</reference>
<feature type="signal peptide" evidence="1">
    <location>
        <begin position="1"/>
        <end position="20"/>
    </location>
</feature>
<feature type="chain" id="PRO_5000098443" description="Chaperone SurA">
    <location>
        <begin position="21"/>
        <end position="434"/>
    </location>
</feature>
<feature type="domain" description="PpiC 1" evidence="1">
    <location>
        <begin position="171"/>
        <end position="272"/>
    </location>
</feature>
<feature type="domain" description="PpiC 2" evidence="1">
    <location>
        <begin position="282"/>
        <end position="382"/>
    </location>
</feature>
<organism>
    <name type="scientific">Yersinia pseudotuberculosis serotype I (strain IP32953)</name>
    <dbReference type="NCBI Taxonomy" id="273123"/>
    <lineage>
        <taxon>Bacteria</taxon>
        <taxon>Pseudomonadati</taxon>
        <taxon>Pseudomonadota</taxon>
        <taxon>Gammaproteobacteria</taxon>
        <taxon>Enterobacterales</taxon>
        <taxon>Yersiniaceae</taxon>
        <taxon>Yersinia</taxon>
    </lineage>
</organism>
<keyword id="KW-0143">Chaperone</keyword>
<keyword id="KW-0413">Isomerase</keyword>
<keyword id="KW-0574">Periplasm</keyword>
<keyword id="KW-0677">Repeat</keyword>
<keyword id="KW-0697">Rotamase</keyword>
<keyword id="KW-0732">Signal</keyword>
<gene>
    <name evidence="1" type="primary">surA</name>
    <name type="ordered locus">YPTB0635</name>
</gene>
<dbReference type="EC" id="5.2.1.8" evidence="1"/>
<dbReference type="EMBL" id="BX936398">
    <property type="protein sequence ID" value="CAH19875.1"/>
    <property type="molecule type" value="Genomic_DNA"/>
</dbReference>
<dbReference type="RefSeq" id="WP_002210488.1">
    <property type="nucleotide sequence ID" value="NZ_CP009712.1"/>
</dbReference>
<dbReference type="SMR" id="Q66EQ7"/>
<dbReference type="GeneID" id="57974116"/>
<dbReference type="KEGG" id="ypo:BZ17_1922"/>
<dbReference type="KEGG" id="yps:YPTB0635"/>
<dbReference type="PATRIC" id="fig|273123.14.peg.2042"/>
<dbReference type="Proteomes" id="UP000001011">
    <property type="component" value="Chromosome"/>
</dbReference>
<dbReference type="GO" id="GO:0030288">
    <property type="term" value="C:outer membrane-bounded periplasmic space"/>
    <property type="evidence" value="ECO:0007669"/>
    <property type="project" value="InterPro"/>
</dbReference>
<dbReference type="GO" id="GO:0042277">
    <property type="term" value="F:peptide binding"/>
    <property type="evidence" value="ECO:0007669"/>
    <property type="project" value="InterPro"/>
</dbReference>
<dbReference type="GO" id="GO:0003755">
    <property type="term" value="F:peptidyl-prolyl cis-trans isomerase activity"/>
    <property type="evidence" value="ECO:0007669"/>
    <property type="project" value="UniProtKB-UniRule"/>
</dbReference>
<dbReference type="GO" id="GO:0051082">
    <property type="term" value="F:unfolded protein binding"/>
    <property type="evidence" value="ECO:0007669"/>
    <property type="project" value="UniProtKB-UniRule"/>
</dbReference>
<dbReference type="GO" id="GO:0043165">
    <property type="term" value="P:Gram-negative-bacterium-type cell outer membrane assembly"/>
    <property type="evidence" value="ECO:0007669"/>
    <property type="project" value="InterPro"/>
</dbReference>
<dbReference type="GO" id="GO:0006457">
    <property type="term" value="P:protein folding"/>
    <property type="evidence" value="ECO:0007669"/>
    <property type="project" value="UniProtKB-UniRule"/>
</dbReference>
<dbReference type="GO" id="GO:0050821">
    <property type="term" value="P:protein stabilization"/>
    <property type="evidence" value="ECO:0007669"/>
    <property type="project" value="InterPro"/>
</dbReference>
<dbReference type="Gene3D" id="3.10.50.40">
    <property type="match status" value="2"/>
</dbReference>
<dbReference type="Gene3D" id="1.10.4030.10">
    <property type="entry name" value="Porin chaperone SurA, peptide-binding domain"/>
    <property type="match status" value="2"/>
</dbReference>
<dbReference type="HAMAP" id="MF_01183">
    <property type="entry name" value="Chaperone_SurA"/>
    <property type="match status" value="1"/>
</dbReference>
<dbReference type="InterPro" id="IPR050280">
    <property type="entry name" value="OMP_Chaperone_SurA"/>
</dbReference>
<dbReference type="InterPro" id="IPR046357">
    <property type="entry name" value="PPIase_dom_sf"/>
</dbReference>
<dbReference type="InterPro" id="IPR000297">
    <property type="entry name" value="PPIase_PpiC"/>
</dbReference>
<dbReference type="InterPro" id="IPR023034">
    <property type="entry name" value="PPIase_SurA"/>
</dbReference>
<dbReference type="InterPro" id="IPR015391">
    <property type="entry name" value="SurA_N"/>
</dbReference>
<dbReference type="InterPro" id="IPR027304">
    <property type="entry name" value="Trigger_fact/SurA_dom_sf"/>
</dbReference>
<dbReference type="NCBIfam" id="NF008038">
    <property type="entry name" value="PRK10770.1"/>
    <property type="match status" value="1"/>
</dbReference>
<dbReference type="PANTHER" id="PTHR47637">
    <property type="entry name" value="CHAPERONE SURA"/>
    <property type="match status" value="1"/>
</dbReference>
<dbReference type="PANTHER" id="PTHR47637:SF1">
    <property type="entry name" value="CHAPERONE SURA"/>
    <property type="match status" value="1"/>
</dbReference>
<dbReference type="Pfam" id="PF00639">
    <property type="entry name" value="Rotamase"/>
    <property type="match status" value="1"/>
</dbReference>
<dbReference type="Pfam" id="PF13616">
    <property type="entry name" value="Rotamase_3"/>
    <property type="match status" value="1"/>
</dbReference>
<dbReference type="Pfam" id="PF09312">
    <property type="entry name" value="SurA_N"/>
    <property type="match status" value="1"/>
</dbReference>
<dbReference type="SUPFAM" id="SSF54534">
    <property type="entry name" value="FKBP-like"/>
    <property type="match status" value="2"/>
</dbReference>
<dbReference type="SUPFAM" id="SSF109998">
    <property type="entry name" value="Triger factor/SurA peptide-binding domain-like"/>
    <property type="match status" value="1"/>
</dbReference>
<dbReference type="PROSITE" id="PS01096">
    <property type="entry name" value="PPIC_PPIASE_1"/>
    <property type="match status" value="1"/>
</dbReference>
<dbReference type="PROSITE" id="PS50198">
    <property type="entry name" value="PPIC_PPIASE_2"/>
    <property type="match status" value="2"/>
</dbReference>
<proteinExistence type="inferred from homology"/>
<evidence type="ECO:0000255" key="1">
    <source>
        <dbReference type="HAMAP-Rule" id="MF_01183"/>
    </source>
</evidence>
<sequence length="434" mass="47733">MKNWRTLILGLVICANTAFAAPQEVDKVAAVVDNGVVLQSDIDGLLQSVKMNAQQSGQQVPDDSTLRHQILERLIMDNIQLQMAKKMGITITDQALDKAIADIAAQNRMTLAQMRSRLAADGLSYDTYREQIRKEMLTSEVRNNEVRRRITILPQEVESLAKQMGNQVSGDTELNLSHILIPLPENPTQQQVDQAEDLANKLVADIKGGADFGKLAIANSADSQALKGGQMGWGKLQELPSLFAERLQSAHKGEIVGPIRSGVGFHILKVNDMRGADQTISVTEVNARHILLKPSPMMTDEQARAKLEAAAAEIKSGKTSFATIAKEISQDPGSAMQGGELGWASPDIYDPAFRDALMKLKKGEISAPVHSSFGWHLIQLVDTRQVDKTDAAQKERAYRMLFNRKFAEEAQTWMQEQRAAAYVKILDGSNAQPQ</sequence>
<name>SURA_YERPS</name>
<accession>Q66EQ7</accession>
<comment type="function">
    <text evidence="1">Chaperone involved in the correct folding and assembly of outer membrane proteins. Recognizes specific patterns of aromatic residues and the orientation of their side chains, which are found more frequently in integral outer membrane proteins. May act in both early periplasmic and late outer membrane-associated steps of protein maturation.</text>
</comment>
<comment type="catalytic activity">
    <reaction evidence="1">
        <text>[protein]-peptidylproline (omega=180) = [protein]-peptidylproline (omega=0)</text>
        <dbReference type="Rhea" id="RHEA:16237"/>
        <dbReference type="Rhea" id="RHEA-COMP:10747"/>
        <dbReference type="Rhea" id="RHEA-COMP:10748"/>
        <dbReference type="ChEBI" id="CHEBI:83833"/>
        <dbReference type="ChEBI" id="CHEBI:83834"/>
        <dbReference type="EC" id="5.2.1.8"/>
    </reaction>
</comment>
<comment type="subcellular location">
    <subcellularLocation>
        <location evidence="1">Periplasm</location>
    </subcellularLocation>
    <text evidence="1">Is capable of associating with the outer membrane.</text>
</comment>
<comment type="domain">
    <text evidence="1">The PPIase activity resides only in the second parvulin domain. The N-terminal region and the C-terminal tail are necessary and sufficient for the chaperone activity of SurA. The PPIase activity is dispensable for SurA to function as a chaperone. The N-terminal region and the C-terminal tail are also required for porin recognition.</text>
</comment>